<accession>Q2JL43</accession>
<gene>
    <name evidence="1" type="primary">groEL1</name>
    <name evidence="1" type="synonym">groL1</name>
    <name type="ordered locus">CYB_1618</name>
</gene>
<keyword id="KW-0067">ATP-binding</keyword>
<keyword id="KW-0143">Chaperone</keyword>
<keyword id="KW-0963">Cytoplasm</keyword>
<keyword id="KW-0413">Isomerase</keyword>
<keyword id="KW-0547">Nucleotide-binding</keyword>
<keyword id="KW-1185">Reference proteome</keyword>
<evidence type="ECO:0000255" key="1">
    <source>
        <dbReference type="HAMAP-Rule" id="MF_00600"/>
    </source>
</evidence>
<evidence type="ECO:0000256" key="2">
    <source>
        <dbReference type="SAM" id="MobiDB-lite"/>
    </source>
</evidence>
<protein>
    <recommendedName>
        <fullName evidence="1">Chaperonin GroEL 1</fullName>
        <ecNumber evidence="1">5.6.1.7</ecNumber>
    </recommendedName>
    <alternativeName>
        <fullName evidence="1">60 kDa chaperonin 1</fullName>
    </alternativeName>
    <alternativeName>
        <fullName evidence="1">Chaperonin-60 1</fullName>
        <shortName evidence="1">Cpn60 1</shortName>
    </alternativeName>
</protein>
<comment type="function">
    <text evidence="1">Together with its co-chaperonin GroES, plays an essential role in assisting protein folding. The GroEL-GroES system forms a nano-cage that allows encapsulation of the non-native substrate proteins and provides a physical environment optimized to promote and accelerate protein folding.</text>
</comment>
<comment type="catalytic activity">
    <reaction evidence="1">
        <text>ATP + H2O + a folded polypeptide = ADP + phosphate + an unfolded polypeptide.</text>
        <dbReference type="EC" id="5.6.1.7"/>
    </reaction>
</comment>
<comment type="subunit">
    <text evidence="1">Forms a cylinder of 14 subunits composed of two heptameric rings stacked back-to-back. Interacts with the co-chaperonin GroES.</text>
</comment>
<comment type="subcellular location">
    <subcellularLocation>
        <location evidence="1">Cytoplasm</location>
    </subcellularLocation>
</comment>
<comment type="similarity">
    <text evidence="1">Belongs to the chaperonin (HSP60) family.</text>
</comment>
<feature type="chain" id="PRO_0000257006" description="Chaperonin GroEL 1">
    <location>
        <begin position="1"/>
        <end position="544"/>
    </location>
</feature>
<feature type="region of interest" description="Disordered" evidence="2">
    <location>
        <begin position="525"/>
        <end position="544"/>
    </location>
</feature>
<feature type="compositionally biased region" description="Polar residues" evidence="2">
    <location>
        <begin position="528"/>
        <end position="538"/>
    </location>
</feature>
<feature type="binding site" evidence="1">
    <location>
        <begin position="29"/>
        <end position="32"/>
    </location>
    <ligand>
        <name>ATP</name>
        <dbReference type="ChEBI" id="CHEBI:30616"/>
    </ligand>
</feature>
<feature type="binding site" evidence="1">
    <location>
        <begin position="86"/>
        <end position="90"/>
    </location>
    <ligand>
        <name>ATP</name>
        <dbReference type="ChEBI" id="CHEBI:30616"/>
    </ligand>
</feature>
<feature type="binding site" evidence="1">
    <location>
        <position position="413"/>
    </location>
    <ligand>
        <name>ATP</name>
        <dbReference type="ChEBI" id="CHEBI:30616"/>
    </ligand>
</feature>
<feature type="binding site" evidence="1">
    <location>
        <position position="495"/>
    </location>
    <ligand>
        <name>ATP</name>
        <dbReference type="ChEBI" id="CHEBI:30616"/>
    </ligand>
</feature>
<proteinExistence type="inferred from homology"/>
<organism>
    <name type="scientific">Synechococcus sp. (strain JA-2-3B'a(2-13))</name>
    <name type="common">Cyanobacteria bacterium Yellowstone B-Prime</name>
    <dbReference type="NCBI Taxonomy" id="321332"/>
    <lineage>
        <taxon>Bacteria</taxon>
        <taxon>Bacillati</taxon>
        <taxon>Cyanobacteriota</taxon>
        <taxon>Cyanophyceae</taxon>
        <taxon>Synechococcales</taxon>
        <taxon>Synechococcaceae</taxon>
        <taxon>Synechococcus</taxon>
    </lineage>
</organism>
<name>CH601_SYNJB</name>
<sequence length="544" mass="58157">MAKSIIFSEEARRALEHGMDILAEAVAVTLGPKGRNVVLEKKFGAPQIINDGVTIAKEIELEDHIENTGVSLIRQAASKTNDTAGDGTTTATVLAHAMVKEGLKNVAAGANPIALKRGIDKAVKFLVDKIAEHARPVEDSKAIAQVAAISAGNDEEVGRMIAEAMDKVGREGVISLEEGKSMTTELEVTEGMRFDKGYISPYFVTDTERMEAVLENPYILITDKKITLVQDLVPVLEQVARAGRPLLIIAEDIEKEALATLVVNKLRGVLSVVAVKAPGFGDRRKAMLEDIAILTGGEVISEERGLKLENARLDSFGTARRVTVTKDNTTIVAEGNEAAVKARCEQIRRQIEETDSTYDKEKLQERLAKLSGGVAVIKVGAATETEMKDRKLRLEDAINATKAAVEEGIVPGGGTTLAHLIPVVTEWAQANLSGDELVGANLVARALGAPLRRIAENAGQNGSIVLERVKDKPFNTGYDAQNDAFVDMFEAGIVDPAKVTRSALQNAASIAGMVLTTEAIVVDKPEPKTNTPASSGSGMSDYDY</sequence>
<dbReference type="EC" id="5.6.1.7" evidence="1"/>
<dbReference type="EMBL" id="CP000240">
    <property type="protein sequence ID" value="ABD02579.1"/>
    <property type="molecule type" value="Genomic_DNA"/>
</dbReference>
<dbReference type="SMR" id="Q2JL43"/>
<dbReference type="STRING" id="321332.CYB_1618"/>
<dbReference type="KEGG" id="cyb:CYB_1618"/>
<dbReference type="eggNOG" id="COG0459">
    <property type="taxonomic scope" value="Bacteria"/>
</dbReference>
<dbReference type="HOGENOM" id="CLU_016503_3_0_3"/>
<dbReference type="OrthoDB" id="9766614at2"/>
<dbReference type="Proteomes" id="UP000001938">
    <property type="component" value="Chromosome"/>
</dbReference>
<dbReference type="GO" id="GO:0005737">
    <property type="term" value="C:cytoplasm"/>
    <property type="evidence" value="ECO:0007669"/>
    <property type="project" value="UniProtKB-SubCell"/>
</dbReference>
<dbReference type="GO" id="GO:0005524">
    <property type="term" value="F:ATP binding"/>
    <property type="evidence" value="ECO:0007669"/>
    <property type="project" value="UniProtKB-UniRule"/>
</dbReference>
<dbReference type="GO" id="GO:0140662">
    <property type="term" value="F:ATP-dependent protein folding chaperone"/>
    <property type="evidence" value="ECO:0007669"/>
    <property type="project" value="InterPro"/>
</dbReference>
<dbReference type="GO" id="GO:0016853">
    <property type="term" value="F:isomerase activity"/>
    <property type="evidence" value="ECO:0007669"/>
    <property type="project" value="UniProtKB-KW"/>
</dbReference>
<dbReference type="GO" id="GO:0051082">
    <property type="term" value="F:unfolded protein binding"/>
    <property type="evidence" value="ECO:0007669"/>
    <property type="project" value="UniProtKB-UniRule"/>
</dbReference>
<dbReference type="GO" id="GO:0042026">
    <property type="term" value="P:protein refolding"/>
    <property type="evidence" value="ECO:0007669"/>
    <property type="project" value="UniProtKB-UniRule"/>
</dbReference>
<dbReference type="CDD" id="cd03344">
    <property type="entry name" value="GroEL"/>
    <property type="match status" value="1"/>
</dbReference>
<dbReference type="FunFam" id="3.50.7.10:FF:000001">
    <property type="entry name" value="60 kDa chaperonin"/>
    <property type="match status" value="1"/>
</dbReference>
<dbReference type="Gene3D" id="3.50.7.10">
    <property type="entry name" value="GroEL"/>
    <property type="match status" value="1"/>
</dbReference>
<dbReference type="Gene3D" id="1.10.560.10">
    <property type="entry name" value="GroEL-like equatorial domain"/>
    <property type="match status" value="1"/>
</dbReference>
<dbReference type="Gene3D" id="3.30.260.10">
    <property type="entry name" value="TCP-1-like chaperonin intermediate domain"/>
    <property type="match status" value="1"/>
</dbReference>
<dbReference type="HAMAP" id="MF_00600">
    <property type="entry name" value="CH60"/>
    <property type="match status" value="1"/>
</dbReference>
<dbReference type="InterPro" id="IPR018370">
    <property type="entry name" value="Chaperonin_Cpn60_CS"/>
</dbReference>
<dbReference type="InterPro" id="IPR001844">
    <property type="entry name" value="Cpn60/GroEL"/>
</dbReference>
<dbReference type="InterPro" id="IPR002423">
    <property type="entry name" value="Cpn60/GroEL/TCP-1"/>
</dbReference>
<dbReference type="InterPro" id="IPR027409">
    <property type="entry name" value="GroEL-like_apical_dom_sf"/>
</dbReference>
<dbReference type="InterPro" id="IPR027413">
    <property type="entry name" value="GROEL-like_equatorial_sf"/>
</dbReference>
<dbReference type="InterPro" id="IPR027410">
    <property type="entry name" value="TCP-1-like_intermed_sf"/>
</dbReference>
<dbReference type="NCBIfam" id="TIGR02348">
    <property type="entry name" value="GroEL"/>
    <property type="match status" value="1"/>
</dbReference>
<dbReference type="NCBIfam" id="NF000592">
    <property type="entry name" value="PRK00013.1"/>
    <property type="match status" value="1"/>
</dbReference>
<dbReference type="NCBIfam" id="NF009487">
    <property type="entry name" value="PRK12849.1"/>
    <property type="match status" value="1"/>
</dbReference>
<dbReference type="NCBIfam" id="NF009488">
    <property type="entry name" value="PRK12850.1"/>
    <property type="match status" value="1"/>
</dbReference>
<dbReference type="NCBIfam" id="NF009489">
    <property type="entry name" value="PRK12851.1"/>
    <property type="match status" value="1"/>
</dbReference>
<dbReference type="PANTHER" id="PTHR45633">
    <property type="entry name" value="60 KDA HEAT SHOCK PROTEIN, MITOCHONDRIAL"/>
    <property type="match status" value="1"/>
</dbReference>
<dbReference type="Pfam" id="PF00118">
    <property type="entry name" value="Cpn60_TCP1"/>
    <property type="match status" value="1"/>
</dbReference>
<dbReference type="PRINTS" id="PR00298">
    <property type="entry name" value="CHAPERONIN60"/>
</dbReference>
<dbReference type="SUPFAM" id="SSF52029">
    <property type="entry name" value="GroEL apical domain-like"/>
    <property type="match status" value="1"/>
</dbReference>
<dbReference type="SUPFAM" id="SSF48592">
    <property type="entry name" value="GroEL equatorial domain-like"/>
    <property type="match status" value="2"/>
</dbReference>
<dbReference type="PROSITE" id="PS00296">
    <property type="entry name" value="CHAPERONINS_CPN60"/>
    <property type="match status" value="1"/>
</dbReference>
<reference key="1">
    <citation type="journal article" date="2007" name="ISME J.">
        <title>Population level functional diversity in a microbial community revealed by comparative genomic and metagenomic analyses.</title>
        <authorList>
            <person name="Bhaya D."/>
            <person name="Grossman A.R."/>
            <person name="Steunou A.-S."/>
            <person name="Khuri N."/>
            <person name="Cohan F.M."/>
            <person name="Hamamura N."/>
            <person name="Melendrez M.C."/>
            <person name="Bateson M.M."/>
            <person name="Ward D.M."/>
            <person name="Heidelberg J.F."/>
        </authorList>
    </citation>
    <scope>NUCLEOTIDE SEQUENCE [LARGE SCALE GENOMIC DNA]</scope>
    <source>
        <strain>JA-2-3B'a(2-13)</strain>
    </source>
</reference>